<feature type="chain" id="PRO_1000134893" description="Phosphoribosylformylglycinamidine synthase subunit PurL">
    <location>
        <begin position="1"/>
        <end position="739"/>
    </location>
</feature>
<feature type="active site" evidence="1">
    <location>
        <position position="54"/>
    </location>
</feature>
<feature type="active site" description="Proton acceptor" evidence="1">
    <location>
        <position position="100"/>
    </location>
</feature>
<feature type="binding site" evidence="1">
    <location>
        <position position="57"/>
    </location>
    <ligand>
        <name>ATP</name>
        <dbReference type="ChEBI" id="CHEBI:30616"/>
    </ligand>
</feature>
<feature type="binding site" evidence="1">
    <location>
        <position position="96"/>
    </location>
    <ligand>
        <name>ATP</name>
        <dbReference type="ChEBI" id="CHEBI:30616"/>
    </ligand>
</feature>
<feature type="binding site" evidence="1">
    <location>
        <position position="98"/>
    </location>
    <ligand>
        <name>Mg(2+)</name>
        <dbReference type="ChEBI" id="CHEBI:18420"/>
        <label>1</label>
    </ligand>
</feature>
<feature type="binding site" evidence="1">
    <location>
        <begin position="99"/>
        <end position="102"/>
    </location>
    <ligand>
        <name>substrate</name>
    </ligand>
</feature>
<feature type="binding site" evidence="1">
    <location>
        <position position="121"/>
    </location>
    <ligand>
        <name>substrate</name>
    </ligand>
</feature>
<feature type="binding site" evidence="1">
    <location>
        <position position="122"/>
    </location>
    <ligand>
        <name>Mg(2+)</name>
        <dbReference type="ChEBI" id="CHEBI:18420"/>
        <label>2</label>
    </ligand>
</feature>
<feature type="binding site" evidence="1">
    <location>
        <position position="245"/>
    </location>
    <ligand>
        <name>substrate</name>
    </ligand>
</feature>
<feature type="binding site" evidence="1">
    <location>
        <position position="273"/>
    </location>
    <ligand>
        <name>Mg(2+)</name>
        <dbReference type="ChEBI" id="CHEBI:18420"/>
        <label>2</label>
    </ligand>
</feature>
<feature type="binding site" evidence="1">
    <location>
        <begin position="317"/>
        <end position="319"/>
    </location>
    <ligand>
        <name>substrate</name>
    </ligand>
</feature>
<feature type="binding site" evidence="1">
    <location>
        <position position="500"/>
    </location>
    <ligand>
        <name>ATP</name>
        <dbReference type="ChEBI" id="CHEBI:30616"/>
    </ligand>
</feature>
<feature type="binding site" evidence="1">
    <location>
        <position position="537"/>
    </location>
    <ligand>
        <name>ATP</name>
        <dbReference type="ChEBI" id="CHEBI:30616"/>
    </ligand>
</feature>
<feature type="binding site" evidence="1">
    <location>
        <position position="538"/>
    </location>
    <ligand>
        <name>Mg(2+)</name>
        <dbReference type="ChEBI" id="CHEBI:18420"/>
        <label>1</label>
    </ligand>
</feature>
<feature type="binding site" evidence="1">
    <location>
        <position position="540"/>
    </location>
    <ligand>
        <name>substrate</name>
    </ligand>
</feature>
<sequence length="739" mass="80175">MSLMLEPNPTQIKEERIYAEMGLTDEEFAMVEKILGRLPNYTETGLFSVMWSEHCSYKNSKPVLRKFPTTGERVLQGPGEGAGIVDIGDNQAVVFKMESHNHPSAIEPYQGAATGVGGIIRDVFSMGARPVALLNSLRFGELQSPRVKYLFEEVVAGIAGYGNCIGIPTVGGEVQFDPCYEGNPLVNAMCVGLINHEDIKKGQAHGAGNTVMYVGASTGRDGIHGATFASEELSESSEAKRPAVQVGDPFMEKLLIEACLELIQSDALVGIQDMGAAGLTSSSAEMASKAGMGIEMYLDDVPQRETGMTPYEMMLSESQERMLIVVKKGREQEIVDLFEKYGLAAVTMGKVTEDKMLRLFHKGEMVAEVPADALAEEAPIYHKPSKEAAYFAEFQQMKMETPKVENYKETLFALLQQPTIASKEWVYDQYDYQVRTSTVVTPGSDAAVVRVRGTEKGLAMTTDCNSRYIYLDPEVGGKIAVAEAARNIVCSGGEPLAITDCLNFGNPEKPEIFWQIEKSVDGMSEACRTLQTPVIGGNVSMYNERSGEAVYPTPTVGMVGLVHDLKHVTTQEFKQAGDLVYVIGETKAEFGGSELQKMLHGKIFGQSPSIDLDVELKRQKQVLAAIQAGLVQSAHDVAEGGLAVAISESAIGANGLGATVKLDGEATAALFAESQSRFVITVKRENKEAFEKAVEAIQVGEVTNTNEVTIHNEENEVLLTANVDEMRKAWKGAIPCLLK</sequence>
<keyword id="KW-0067">ATP-binding</keyword>
<keyword id="KW-0963">Cytoplasm</keyword>
<keyword id="KW-0436">Ligase</keyword>
<keyword id="KW-0460">Magnesium</keyword>
<keyword id="KW-0479">Metal-binding</keyword>
<keyword id="KW-0547">Nucleotide-binding</keyword>
<keyword id="KW-0658">Purine biosynthesis</keyword>
<gene>
    <name evidence="1" type="primary">purL</name>
    <name type="ordered locus">BAMEG_0352</name>
</gene>
<accession>C3L532</accession>
<reference key="1">
    <citation type="submission" date="2008-10" db="EMBL/GenBank/DDBJ databases">
        <title>Genome sequence of Bacillus anthracis str. CDC 684.</title>
        <authorList>
            <person name="Dodson R.J."/>
            <person name="Munk A.C."/>
            <person name="Brettin T."/>
            <person name="Bruce D."/>
            <person name="Detter C."/>
            <person name="Tapia R."/>
            <person name="Han C."/>
            <person name="Sutton G."/>
            <person name="Sims D."/>
        </authorList>
    </citation>
    <scope>NUCLEOTIDE SEQUENCE [LARGE SCALE GENOMIC DNA]</scope>
    <source>
        <strain>CDC 684 / NRRL 3495</strain>
    </source>
</reference>
<protein>
    <recommendedName>
        <fullName evidence="1">Phosphoribosylformylglycinamidine synthase subunit PurL</fullName>
        <shortName evidence="1">FGAM synthase</shortName>
        <ecNumber evidence="1">6.3.5.3</ecNumber>
    </recommendedName>
    <alternativeName>
        <fullName evidence="1">Formylglycinamide ribonucleotide amidotransferase subunit II</fullName>
        <shortName evidence="1">FGAR amidotransferase II</shortName>
        <shortName evidence="1">FGAR-AT II</shortName>
    </alternativeName>
    <alternativeName>
        <fullName evidence="1">Glutamine amidotransferase PurL</fullName>
    </alternativeName>
    <alternativeName>
        <fullName evidence="1">Phosphoribosylformylglycinamidine synthase subunit II</fullName>
    </alternativeName>
</protein>
<proteinExistence type="inferred from homology"/>
<comment type="function">
    <text evidence="1">Part of the phosphoribosylformylglycinamidine synthase complex involved in the purines biosynthetic pathway. Catalyzes the ATP-dependent conversion of formylglycinamide ribonucleotide (FGAR) and glutamine to yield formylglycinamidine ribonucleotide (FGAM) and glutamate. The FGAM synthase complex is composed of three subunits. PurQ produces an ammonia molecule by converting glutamine to glutamate. PurL transfers the ammonia molecule to FGAR to form FGAM in an ATP-dependent manner. PurS interacts with PurQ and PurL and is thought to assist in the transfer of the ammonia molecule from PurQ to PurL.</text>
</comment>
<comment type="catalytic activity">
    <reaction evidence="1">
        <text>N(2)-formyl-N(1)-(5-phospho-beta-D-ribosyl)glycinamide + L-glutamine + ATP + H2O = 2-formamido-N(1)-(5-O-phospho-beta-D-ribosyl)acetamidine + L-glutamate + ADP + phosphate + H(+)</text>
        <dbReference type="Rhea" id="RHEA:17129"/>
        <dbReference type="ChEBI" id="CHEBI:15377"/>
        <dbReference type="ChEBI" id="CHEBI:15378"/>
        <dbReference type="ChEBI" id="CHEBI:29985"/>
        <dbReference type="ChEBI" id="CHEBI:30616"/>
        <dbReference type="ChEBI" id="CHEBI:43474"/>
        <dbReference type="ChEBI" id="CHEBI:58359"/>
        <dbReference type="ChEBI" id="CHEBI:147286"/>
        <dbReference type="ChEBI" id="CHEBI:147287"/>
        <dbReference type="ChEBI" id="CHEBI:456216"/>
        <dbReference type="EC" id="6.3.5.3"/>
    </reaction>
</comment>
<comment type="pathway">
    <text evidence="1">Purine metabolism; IMP biosynthesis via de novo pathway; 5-amino-1-(5-phospho-D-ribosyl)imidazole from N(2)-formyl-N(1)-(5-phospho-D-ribosyl)glycinamide: step 1/2.</text>
</comment>
<comment type="subunit">
    <text evidence="1">Monomer. Part of the FGAM synthase complex composed of 1 PurL, 1 PurQ and 2 PurS subunits.</text>
</comment>
<comment type="subcellular location">
    <subcellularLocation>
        <location evidence="1">Cytoplasm</location>
    </subcellularLocation>
</comment>
<comment type="similarity">
    <text evidence="1">Belongs to the FGAMS family.</text>
</comment>
<evidence type="ECO:0000255" key="1">
    <source>
        <dbReference type="HAMAP-Rule" id="MF_00420"/>
    </source>
</evidence>
<name>PURL_BACAC</name>
<organism>
    <name type="scientific">Bacillus anthracis (strain CDC 684 / NRRL 3495)</name>
    <dbReference type="NCBI Taxonomy" id="568206"/>
    <lineage>
        <taxon>Bacteria</taxon>
        <taxon>Bacillati</taxon>
        <taxon>Bacillota</taxon>
        <taxon>Bacilli</taxon>
        <taxon>Bacillales</taxon>
        <taxon>Bacillaceae</taxon>
        <taxon>Bacillus</taxon>
        <taxon>Bacillus cereus group</taxon>
    </lineage>
</organism>
<dbReference type="EC" id="6.3.5.3" evidence="1"/>
<dbReference type="EMBL" id="CP001215">
    <property type="protein sequence ID" value="ACP15125.1"/>
    <property type="molecule type" value="Genomic_DNA"/>
</dbReference>
<dbReference type="RefSeq" id="WP_000055577.1">
    <property type="nucleotide sequence ID" value="NC_012581.1"/>
</dbReference>
<dbReference type="SMR" id="C3L532"/>
<dbReference type="GeneID" id="45020353"/>
<dbReference type="KEGG" id="bah:BAMEG_0352"/>
<dbReference type="HOGENOM" id="CLU_003100_0_1_9"/>
<dbReference type="UniPathway" id="UPA00074">
    <property type="reaction ID" value="UER00128"/>
</dbReference>
<dbReference type="GO" id="GO:0005737">
    <property type="term" value="C:cytoplasm"/>
    <property type="evidence" value="ECO:0007669"/>
    <property type="project" value="UniProtKB-SubCell"/>
</dbReference>
<dbReference type="GO" id="GO:0005524">
    <property type="term" value="F:ATP binding"/>
    <property type="evidence" value="ECO:0007669"/>
    <property type="project" value="UniProtKB-UniRule"/>
</dbReference>
<dbReference type="GO" id="GO:0000287">
    <property type="term" value="F:magnesium ion binding"/>
    <property type="evidence" value="ECO:0007669"/>
    <property type="project" value="UniProtKB-UniRule"/>
</dbReference>
<dbReference type="GO" id="GO:0004642">
    <property type="term" value="F:phosphoribosylformylglycinamidine synthase activity"/>
    <property type="evidence" value="ECO:0007669"/>
    <property type="project" value="UniProtKB-UniRule"/>
</dbReference>
<dbReference type="GO" id="GO:0006189">
    <property type="term" value="P:'de novo' IMP biosynthetic process"/>
    <property type="evidence" value="ECO:0007669"/>
    <property type="project" value="UniProtKB-UniRule"/>
</dbReference>
<dbReference type="CDD" id="cd02203">
    <property type="entry name" value="PurL_repeat1"/>
    <property type="match status" value="1"/>
</dbReference>
<dbReference type="CDD" id="cd02204">
    <property type="entry name" value="PurL_repeat2"/>
    <property type="match status" value="1"/>
</dbReference>
<dbReference type="FunFam" id="3.30.1330.10:FF:000004">
    <property type="entry name" value="Phosphoribosylformylglycinamidine synthase subunit PurL"/>
    <property type="match status" value="1"/>
</dbReference>
<dbReference type="FunFam" id="3.30.1330.10:FF:000011">
    <property type="entry name" value="Phosphoribosylformylglycinamidine synthase subunit PurL"/>
    <property type="match status" value="1"/>
</dbReference>
<dbReference type="FunFam" id="3.90.650.10:FF:000009">
    <property type="entry name" value="Phosphoribosylformylglycinamidine synthase subunit PurL"/>
    <property type="match status" value="1"/>
</dbReference>
<dbReference type="FunFam" id="3.90.650.10:FF:000013">
    <property type="entry name" value="Phosphoribosylformylglycinamidine synthase subunit PurL"/>
    <property type="match status" value="1"/>
</dbReference>
<dbReference type="Gene3D" id="3.90.650.10">
    <property type="entry name" value="PurM-like C-terminal domain"/>
    <property type="match status" value="2"/>
</dbReference>
<dbReference type="Gene3D" id="3.30.1330.10">
    <property type="entry name" value="PurM-like, N-terminal domain"/>
    <property type="match status" value="2"/>
</dbReference>
<dbReference type="HAMAP" id="MF_00420">
    <property type="entry name" value="PurL_2"/>
    <property type="match status" value="1"/>
</dbReference>
<dbReference type="InterPro" id="IPR010074">
    <property type="entry name" value="PRibForGlyAmidine_synth_PurL"/>
</dbReference>
<dbReference type="InterPro" id="IPR041609">
    <property type="entry name" value="PurL_linker"/>
</dbReference>
<dbReference type="InterPro" id="IPR010918">
    <property type="entry name" value="PurM-like_C_dom"/>
</dbReference>
<dbReference type="InterPro" id="IPR036676">
    <property type="entry name" value="PurM-like_C_sf"/>
</dbReference>
<dbReference type="InterPro" id="IPR016188">
    <property type="entry name" value="PurM-like_N"/>
</dbReference>
<dbReference type="InterPro" id="IPR036921">
    <property type="entry name" value="PurM-like_N_sf"/>
</dbReference>
<dbReference type="NCBIfam" id="TIGR01736">
    <property type="entry name" value="FGAM_synth_II"/>
    <property type="match status" value="1"/>
</dbReference>
<dbReference type="NCBIfam" id="NF002290">
    <property type="entry name" value="PRK01213.1"/>
    <property type="match status" value="1"/>
</dbReference>
<dbReference type="PANTHER" id="PTHR43555">
    <property type="entry name" value="PHOSPHORIBOSYLFORMYLGLYCINAMIDINE SYNTHASE SUBUNIT PURL"/>
    <property type="match status" value="1"/>
</dbReference>
<dbReference type="PANTHER" id="PTHR43555:SF1">
    <property type="entry name" value="PHOSPHORIBOSYLFORMYLGLYCINAMIDINE SYNTHASE SUBUNIT PURL"/>
    <property type="match status" value="1"/>
</dbReference>
<dbReference type="Pfam" id="PF00586">
    <property type="entry name" value="AIRS"/>
    <property type="match status" value="2"/>
</dbReference>
<dbReference type="Pfam" id="PF02769">
    <property type="entry name" value="AIRS_C"/>
    <property type="match status" value="2"/>
</dbReference>
<dbReference type="Pfam" id="PF18072">
    <property type="entry name" value="FGAR-AT_linker"/>
    <property type="match status" value="1"/>
</dbReference>
<dbReference type="PIRSF" id="PIRSF001587">
    <property type="entry name" value="FGAM_synthase_II"/>
    <property type="match status" value="1"/>
</dbReference>
<dbReference type="SUPFAM" id="SSF56042">
    <property type="entry name" value="PurM C-terminal domain-like"/>
    <property type="match status" value="2"/>
</dbReference>
<dbReference type="SUPFAM" id="SSF55326">
    <property type="entry name" value="PurM N-terminal domain-like"/>
    <property type="match status" value="2"/>
</dbReference>